<accession>A4YBZ3</accession>
<name>RL1_SHEPC</name>
<sequence>MAKLTKRMRVIREKVDGTKLYEINDAVALLKELATAKFVESVDVAVNLGIDPRKSDQNVRGATVLPHGTGRDVRVAVFTQGANAEAAKAAGAELVGMDDLAEQIKAGEMNFDVVIASPDAMRVVGMLGQILGPRGLMPNPKTGTVTPNVAEAVKNAKAGQVRYRNDKNGIIHTTIGKVDFTPVQLKENLEALISALKKAKPAVAKGVYVKKVSISTTMGAGVAVDQATLDTAN</sequence>
<protein>
    <recommendedName>
        <fullName evidence="1">Large ribosomal subunit protein uL1</fullName>
    </recommendedName>
    <alternativeName>
        <fullName evidence="2">50S ribosomal protein L1</fullName>
    </alternativeName>
</protein>
<evidence type="ECO:0000255" key="1">
    <source>
        <dbReference type="HAMAP-Rule" id="MF_01318"/>
    </source>
</evidence>
<evidence type="ECO:0000305" key="2"/>
<dbReference type="EMBL" id="CP000681">
    <property type="protein sequence ID" value="ABP77476.1"/>
    <property type="molecule type" value="Genomic_DNA"/>
</dbReference>
<dbReference type="SMR" id="A4YBZ3"/>
<dbReference type="STRING" id="319224.Sputcn32_3769"/>
<dbReference type="KEGG" id="spc:Sputcn32_3769"/>
<dbReference type="eggNOG" id="COG0081">
    <property type="taxonomic scope" value="Bacteria"/>
</dbReference>
<dbReference type="HOGENOM" id="CLU_062853_0_0_6"/>
<dbReference type="GO" id="GO:0022625">
    <property type="term" value="C:cytosolic large ribosomal subunit"/>
    <property type="evidence" value="ECO:0007669"/>
    <property type="project" value="TreeGrafter"/>
</dbReference>
<dbReference type="GO" id="GO:0019843">
    <property type="term" value="F:rRNA binding"/>
    <property type="evidence" value="ECO:0007669"/>
    <property type="project" value="UniProtKB-UniRule"/>
</dbReference>
<dbReference type="GO" id="GO:0003735">
    <property type="term" value="F:structural constituent of ribosome"/>
    <property type="evidence" value="ECO:0007669"/>
    <property type="project" value="InterPro"/>
</dbReference>
<dbReference type="GO" id="GO:0000049">
    <property type="term" value="F:tRNA binding"/>
    <property type="evidence" value="ECO:0007669"/>
    <property type="project" value="UniProtKB-KW"/>
</dbReference>
<dbReference type="GO" id="GO:0006417">
    <property type="term" value="P:regulation of translation"/>
    <property type="evidence" value="ECO:0007669"/>
    <property type="project" value="UniProtKB-KW"/>
</dbReference>
<dbReference type="GO" id="GO:0006412">
    <property type="term" value="P:translation"/>
    <property type="evidence" value="ECO:0007669"/>
    <property type="project" value="UniProtKB-UniRule"/>
</dbReference>
<dbReference type="CDD" id="cd00403">
    <property type="entry name" value="Ribosomal_L1"/>
    <property type="match status" value="1"/>
</dbReference>
<dbReference type="FunFam" id="3.40.50.790:FF:000001">
    <property type="entry name" value="50S ribosomal protein L1"/>
    <property type="match status" value="1"/>
</dbReference>
<dbReference type="Gene3D" id="3.30.190.20">
    <property type="match status" value="1"/>
</dbReference>
<dbReference type="Gene3D" id="3.40.50.790">
    <property type="match status" value="1"/>
</dbReference>
<dbReference type="HAMAP" id="MF_01318_B">
    <property type="entry name" value="Ribosomal_uL1_B"/>
    <property type="match status" value="1"/>
</dbReference>
<dbReference type="InterPro" id="IPR005878">
    <property type="entry name" value="Ribosom_uL1_bac-type"/>
</dbReference>
<dbReference type="InterPro" id="IPR002143">
    <property type="entry name" value="Ribosomal_uL1"/>
</dbReference>
<dbReference type="InterPro" id="IPR023674">
    <property type="entry name" value="Ribosomal_uL1-like"/>
</dbReference>
<dbReference type="InterPro" id="IPR028364">
    <property type="entry name" value="Ribosomal_uL1/biogenesis"/>
</dbReference>
<dbReference type="InterPro" id="IPR016095">
    <property type="entry name" value="Ribosomal_uL1_3-a/b-sand"/>
</dbReference>
<dbReference type="InterPro" id="IPR023673">
    <property type="entry name" value="Ribosomal_uL1_CS"/>
</dbReference>
<dbReference type="NCBIfam" id="TIGR01169">
    <property type="entry name" value="rplA_bact"/>
    <property type="match status" value="1"/>
</dbReference>
<dbReference type="PANTHER" id="PTHR36427">
    <property type="entry name" value="54S RIBOSOMAL PROTEIN L1, MITOCHONDRIAL"/>
    <property type="match status" value="1"/>
</dbReference>
<dbReference type="PANTHER" id="PTHR36427:SF3">
    <property type="entry name" value="LARGE RIBOSOMAL SUBUNIT PROTEIN UL1M"/>
    <property type="match status" value="1"/>
</dbReference>
<dbReference type="Pfam" id="PF00687">
    <property type="entry name" value="Ribosomal_L1"/>
    <property type="match status" value="1"/>
</dbReference>
<dbReference type="PIRSF" id="PIRSF002155">
    <property type="entry name" value="Ribosomal_L1"/>
    <property type="match status" value="1"/>
</dbReference>
<dbReference type="SUPFAM" id="SSF56808">
    <property type="entry name" value="Ribosomal protein L1"/>
    <property type="match status" value="1"/>
</dbReference>
<dbReference type="PROSITE" id="PS01199">
    <property type="entry name" value="RIBOSOMAL_L1"/>
    <property type="match status" value="1"/>
</dbReference>
<keyword id="KW-0678">Repressor</keyword>
<keyword id="KW-0687">Ribonucleoprotein</keyword>
<keyword id="KW-0689">Ribosomal protein</keyword>
<keyword id="KW-0694">RNA-binding</keyword>
<keyword id="KW-0699">rRNA-binding</keyword>
<keyword id="KW-0810">Translation regulation</keyword>
<keyword id="KW-0820">tRNA-binding</keyword>
<reference key="1">
    <citation type="submission" date="2007-04" db="EMBL/GenBank/DDBJ databases">
        <title>Complete sequence of Shewanella putrefaciens CN-32.</title>
        <authorList>
            <consortium name="US DOE Joint Genome Institute"/>
            <person name="Copeland A."/>
            <person name="Lucas S."/>
            <person name="Lapidus A."/>
            <person name="Barry K."/>
            <person name="Detter J.C."/>
            <person name="Glavina del Rio T."/>
            <person name="Hammon N."/>
            <person name="Israni S."/>
            <person name="Dalin E."/>
            <person name="Tice H."/>
            <person name="Pitluck S."/>
            <person name="Chain P."/>
            <person name="Malfatti S."/>
            <person name="Shin M."/>
            <person name="Vergez L."/>
            <person name="Schmutz J."/>
            <person name="Larimer F."/>
            <person name="Land M."/>
            <person name="Hauser L."/>
            <person name="Kyrpides N."/>
            <person name="Mikhailova N."/>
            <person name="Romine M.F."/>
            <person name="Fredrickson J."/>
            <person name="Tiedje J."/>
            <person name="Richardson P."/>
        </authorList>
    </citation>
    <scope>NUCLEOTIDE SEQUENCE [LARGE SCALE GENOMIC DNA]</scope>
    <source>
        <strain>CN-32 / ATCC BAA-453</strain>
    </source>
</reference>
<comment type="function">
    <text evidence="1">Binds directly to 23S rRNA. The L1 stalk is quite mobile in the ribosome, and is involved in E site tRNA release.</text>
</comment>
<comment type="function">
    <text evidence="1">Protein L1 is also a translational repressor protein, it controls the translation of the L11 operon by binding to its mRNA.</text>
</comment>
<comment type="subunit">
    <text evidence="1">Part of the 50S ribosomal subunit.</text>
</comment>
<comment type="similarity">
    <text evidence="1">Belongs to the universal ribosomal protein uL1 family.</text>
</comment>
<organism>
    <name type="scientific">Shewanella putrefaciens (strain CN-32 / ATCC BAA-453)</name>
    <dbReference type="NCBI Taxonomy" id="319224"/>
    <lineage>
        <taxon>Bacteria</taxon>
        <taxon>Pseudomonadati</taxon>
        <taxon>Pseudomonadota</taxon>
        <taxon>Gammaproteobacteria</taxon>
        <taxon>Alteromonadales</taxon>
        <taxon>Shewanellaceae</taxon>
        <taxon>Shewanella</taxon>
    </lineage>
</organism>
<gene>
    <name evidence="1" type="primary">rplA</name>
    <name type="ordered locus">Sputcn32_3769</name>
</gene>
<proteinExistence type="inferred from homology"/>
<feature type="chain" id="PRO_1000051922" description="Large ribosomal subunit protein uL1">
    <location>
        <begin position="1"/>
        <end position="233"/>
    </location>
</feature>